<reference key="1">
    <citation type="submission" date="2006-02" db="EMBL/GenBank/DDBJ databases">
        <authorList>
            <consortium name="NIH - Mammalian Gene Collection (MGC) project"/>
        </authorList>
    </citation>
    <scope>NUCLEOTIDE SEQUENCE [LARGE SCALE MRNA]</scope>
    <source>
        <strain>Hereford</strain>
        <tissue>Uterus</tissue>
    </source>
</reference>
<reference key="2">
    <citation type="journal article" date="1989" name="J. Biol. Chem.">
        <title>The isolation and primary structure of a 22-kDa extracellular matrix protein from bovine skin.</title>
        <authorList>
            <person name="Neame P.J."/>
            <person name="Choi H.U."/>
            <person name="Rosenberg L.C."/>
        </authorList>
    </citation>
    <scope>PROTEIN SEQUENCE OF 19-201</scope>
    <scope>PYROGLUTAMATE FORMATION AT GLN-19</scope>
    <scope>DISULFIDE BONDS</scope>
    <source>
        <tissue>Skin</tissue>
    </source>
</reference>
<reference key="3">
    <citation type="journal article" date="1996" name="J. Biochem.">
        <title>Extracellular matrix 22-kDa protein interacts with decorin core protein and is expressed in cutaneous fibrosis.</title>
        <authorList>
            <person name="Okamoto O."/>
            <person name="Suzuki Y."/>
            <person name="Kimura S."/>
            <person name="Shinkai H."/>
        </authorList>
    </citation>
    <scope>PROTEIN SEQUENCE OF 44-65; 72-134 AND 138-201</scope>
    <scope>INTERACTION WITH DCN AND COLLAGEN</scope>
    <scope>TISSUE SPECIFICITY</scope>
</reference>
<reference key="4">
    <citation type="journal article" date="1991" name="J. Cell Sci.">
        <title>Extracellular matrix adhesion-promoting activities of a dermatan sulfate proteoglycan-associated protein (22K) from bovine fetal skin.</title>
        <authorList>
            <person name="Lewandowska K."/>
            <person name="Choi H.U."/>
            <person name="Rosenberg L.C."/>
            <person name="Sasse J."/>
            <person name="Neame P.J."/>
            <person name="Culp L.A."/>
        </authorList>
    </citation>
    <scope>FUNCTION</scope>
    <scope>SUBCELLULAR LOCATION</scope>
</reference>
<reference key="5">
    <citation type="journal article" date="1999" name="Biochem. J.">
        <title>Dermatopontin interacts with transforming growth factor beta and enhances its biological activity.</title>
        <authorList>
            <person name="Okamoto O."/>
            <person name="Fujiwara S."/>
            <person name="Abe M."/>
            <person name="Sato Y."/>
        </authorList>
    </citation>
    <scope>FUNCTION</scope>
    <scope>INTERACTION WITH TGFB1 AND DCN</scope>
</reference>
<dbReference type="EMBL" id="BC113221">
    <property type="protein sequence ID" value="AAI13222.1"/>
    <property type="molecule type" value="mRNA"/>
</dbReference>
<dbReference type="PIR" id="A32851">
    <property type="entry name" value="A32851"/>
</dbReference>
<dbReference type="RefSeq" id="NP_001039368.1">
    <property type="nucleotide sequence ID" value="NM_001045903.1"/>
</dbReference>
<dbReference type="FunCoup" id="P19427">
    <property type="interactions" value="289"/>
</dbReference>
<dbReference type="STRING" id="9913.ENSBTAP00000028263"/>
<dbReference type="PaxDb" id="9913-ENSBTAP00000028263"/>
<dbReference type="Ensembl" id="ENSBTAT00000028263.5">
    <property type="protein sequence ID" value="ENSBTAP00000028263.4"/>
    <property type="gene ID" value="ENSBTAG00000021211.6"/>
</dbReference>
<dbReference type="GeneID" id="504963"/>
<dbReference type="KEGG" id="bta:504963"/>
<dbReference type="CTD" id="1805"/>
<dbReference type="VEuPathDB" id="HostDB:ENSBTAG00000021211"/>
<dbReference type="VGNC" id="VGNC:28191">
    <property type="gene designation" value="DPT"/>
</dbReference>
<dbReference type="eggNOG" id="ENOG502RTKC">
    <property type="taxonomic scope" value="Eukaryota"/>
</dbReference>
<dbReference type="GeneTree" id="ENSGT00390000010760"/>
<dbReference type="HOGENOM" id="CLU_122082_1_0_1"/>
<dbReference type="InParanoid" id="P19427"/>
<dbReference type="OMA" id="RAGMEWS"/>
<dbReference type="OrthoDB" id="8545119at2759"/>
<dbReference type="TreeFam" id="TF328602"/>
<dbReference type="Proteomes" id="UP000009136">
    <property type="component" value="Chromosome 16"/>
</dbReference>
<dbReference type="Bgee" id="ENSBTAG00000021211">
    <property type="expression patterns" value="Expressed in ureter and 102 other cell types or tissues"/>
</dbReference>
<dbReference type="GO" id="GO:0005576">
    <property type="term" value="C:extracellular region"/>
    <property type="evidence" value="ECO:0007669"/>
    <property type="project" value="UniProtKB-KW"/>
</dbReference>
<dbReference type="GO" id="GO:0007155">
    <property type="term" value="P:cell adhesion"/>
    <property type="evidence" value="ECO:0007669"/>
    <property type="project" value="UniProtKB-KW"/>
</dbReference>
<dbReference type="GO" id="GO:0030199">
    <property type="term" value="P:collagen fibril organization"/>
    <property type="evidence" value="ECO:0000318"/>
    <property type="project" value="GO_Central"/>
</dbReference>
<dbReference type="GO" id="GO:0008285">
    <property type="term" value="P:negative regulation of cell population proliferation"/>
    <property type="evidence" value="ECO:0007669"/>
    <property type="project" value="Ensembl"/>
</dbReference>
<dbReference type="InterPro" id="IPR026645">
    <property type="entry name" value="Dermatopontin"/>
</dbReference>
<dbReference type="PANTHER" id="PTHR15040:SF2">
    <property type="entry name" value="DERMATOPONTIN"/>
    <property type="match status" value="1"/>
</dbReference>
<dbReference type="PANTHER" id="PTHR15040">
    <property type="entry name" value="DERMATOPONTIN-RELATED"/>
    <property type="match status" value="1"/>
</dbReference>
<dbReference type="Pfam" id="PF14704">
    <property type="entry name" value="DERM"/>
    <property type="match status" value="1"/>
</dbReference>
<organism>
    <name type="scientific">Bos taurus</name>
    <name type="common">Bovine</name>
    <dbReference type="NCBI Taxonomy" id="9913"/>
    <lineage>
        <taxon>Eukaryota</taxon>
        <taxon>Metazoa</taxon>
        <taxon>Chordata</taxon>
        <taxon>Craniata</taxon>
        <taxon>Vertebrata</taxon>
        <taxon>Euteleostomi</taxon>
        <taxon>Mammalia</taxon>
        <taxon>Eutheria</taxon>
        <taxon>Laurasiatheria</taxon>
        <taxon>Artiodactyla</taxon>
        <taxon>Ruminantia</taxon>
        <taxon>Pecora</taxon>
        <taxon>Bovidae</taxon>
        <taxon>Bovinae</taxon>
        <taxon>Bos</taxon>
    </lineage>
</organism>
<gene>
    <name type="primary">DPT</name>
</gene>
<protein>
    <recommendedName>
        <fullName>Dermatopontin</fullName>
    </recommendedName>
    <alternativeName>
        <fullName>22 kDa extracellular matrix protein</fullName>
    </alternativeName>
    <alternativeName>
        <fullName>Dermatan sulfate proteoglycan-associated protein 22K</fullName>
    </alternativeName>
    <alternativeName>
        <fullName>Tyrosine-rich acidic matrix protein</fullName>
        <shortName>TRAMP</shortName>
    </alternativeName>
</protein>
<sequence length="201" mass="24012">MDLTLLWVLLPLVTVAWGQYGDYGYSYHQYHDYSDDGWVNLNRQGFSYQCPHGQVVVAVRSIFNKKEGSDRQWNYACMPTPQSLGEPTECWWEEINRAGMEWYQTCSNNGLVAGFQSRYFESVLDREWQFYCCRYSKRCPYSCWLTTEYPGHYGEEMDMISYNYDYYMRGATTTFSAVERDRQWKFIMCRMTDYDCEFANV</sequence>
<proteinExistence type="evidence at protein level"/>
<comment type="function">
    <text evidence="3 6">Seems to mediate adhesion by cell surface integrin binding. May serve as a communication link between the dermal fibroblast cell surface and its extracellular matrix environment. Enhances TGFB1 activity. Inhibits cell proliferation. Accelerates collagen fibril formation, and stabilizes collagen fibrils against low-temperature dissociation.</text>
</comment>
<comment type="subunit">
    <text evidence="5 6">Interacts with TGFB1, DCN and collagen.</text>
</comment>
<comment type="subcellular location">
    <subcellularLocation>
        <location evidence="3">Secreted</location>
        <location evidence="3">Extracellular space</location>
        <location evidence="3">Extracellular matrix</location>
    </subcellularLocation>
</comment>
<comment type="tissue specificity">
    <text evidence="5">Expressed in skeletal muscle, heart, pancreas, skin and cultured fibroblasts.</text>
</comment>
<comment type="PTM">
    <text evidence="1">Sulfated on tyrosine residue(s).</text>
</comment>
<comment type="similarity">
    <text evidence="7">Belongs to the dermatopontin family.</text>
</comment>
<keyword id="KW-0130">Cell adhesion</keyword>
<keyword id="KW-0903">Direct protein sequencing</keyword>
<keyword id="KW-1015">Disulfide bond</keyword>
<keyword id="KW-0272">Extracellular matrix</keyword>
<keyword id="KW-0873">Pyrrolidone carboxylic acid</keyword>
<keyword id="KW-1185">Reference proteome</keyword>
<keyword id="KW-0677">Repeat</keyword>
<keyword id="KW-0964">Secreted</keyword>
<keyword id="KW-0732">Signal</keyword>
<keyword id="KW-0765">Sulfation</keyword>
<name>DERM_BOVIN</name>
<accession>P19427</accession>
<accession>Q29S18</accession>
<feature type="signal peptide" evidence="4">
    <location>
        <begin position="1"/>
        <end position="18"/>
    </location>
</feature>
<feature type="chain" id="PRO_0000145478" description="Dermatopontin">
    <location>
        <begin position="19"/>
        <end position="201"/>
    </location>
</feature>
<feature type="repeat" description="1-1">
    <location>
        <begin position="26"/>
        <end position="79"/>
    </location>
</feature>
<feature type="repeat" description="2-1">
    <location>
        <begin position="70"/>
        <end position="75"/>
    </location>
</feature>
<feature type="repeat" description="1-2">
    <location>
        <begin position="80"/>
        <end position="135"/>
    </location>
</feature>
<feature type="repeat" description="2-2">
    <location>
        <begin position="125"/>
        <end position="130"/>
    </location>
</feature>
<feature type="repeat" description="2-3">
    <location>
        <begin position="181"/>
        <end position="186"/>
    </location>
</feature>
<feature type="region of interest" description="2 X 53-55 AA tandem repeats">
    <location>
        <begin position="26"/>
        <end position="135"/>
    </location>
</feature>
<feature type="region of interest" description="3 X 6 AA tandem repeats of D-R-[EQ]-W-[NQK]-[FY]">
    <location>
        <begin position="70"/>
        <end position="186"/>
    </location>
</feature>
<feature type="modified residue" description="Pyrrolidone carboxylic acid" evidence="4">
    <location>
        <position position="19"/>
    </location>
</feature>
<feature type="modified residue" description="Sulfotyrosine" evidence="2">
    <location>
        <position position="23"/>
    </location>
</feature>
<feature type="modified residue" description="Sulfotyrosine" evidence="2">
    <location>
        <position position="162"/>
    </location>
</feature>
<feature type="modified residue" description="Sulfotyrosine" evidence="2">
    <location>
        <position position="164"/>
    </location>
</feature>
<feature type="modified residue" description="Sulfotyrosine" evidence="2">
    <location>
        <position position="166"/>
    </location>
</feature>
<feature type="modified residue" description="Sulfotyrosine" evidence="2">
    <location>
        <position position="167"/>
    </location>
</feature>
<feature type="modified residue" description="Sulfotyrosine" evidence="2">
    <location>
        <position position="194"/>
    </location>
</feature>
<feature type="disulfide bond" evidence="4">
    <location>
        <begin position="50"/>
        <end position="77"/>
    </location>
</feature>
<feature type="disulfide bond" description="Or C-90 with C-133" evidence="4">
    <location>
        <begin position="90"/>
        <end position="132"/>
    </location>
</feature>
<feature type="disulfide bond" description="Or C-106 with C-132" evidence="4">
    <location>
        <begin position="106"/>
        <end position="133"/>
    </location>
</feature>
<feature type="disulfide bond" evidence="4">
    <location>
        <begin position="139"/>
        <end position="196"/>
    </location>
</feature>
<feature type="disulfide bond" evidence="8">
    <location>
        <begin position="143"/>
        <end position="189"/>
    </location>
</feature>
<evidence type="ECO:0000250" key="1"/>
<evidence type="ECO:0000255" key="2"/>
<evidence type="ECO:0000269" key="3">
    <source>
    </source>
</evidence>
<evidence type="ECO:0000269" key="4">
    <source>
    </source>
</evidence>
<evidence type="ECO:0000269" key="5">
    <source>
    </source>
</evidence>
<evidence type="ECO:0000269" key="6">
    <source>
    </source>
</evidence>
<evidence type="ECO:0000305" key="7"/>
<evidence type="ECO:0000305" key="8">
    <source>
    </source>
</evidence>